<reference key="1">
    <citation type="journal article" date="2007" name="PLoS Genet.">
        <title>Patterns and implications of gene gain and loss in the evolution of Prochlorococcus.</title>
        <authorList>
            <person name="Kettler G.C."/>
            <person name="Martiny A.C."/>
            <person name="Huang K."/>
            <person name="Zucker J."/>
            <person name="Coleman M.L."/>
            <person name="Rodrigue S."/>
            <person name="Chen F."/>
            <person name="Lapidus A."/>
            <person name="Ferriera S."/>
            <person name="Johnson J."/>
            <person name="Steglich C."/>
            <person name="Church G.M."/>
            <person name="Richardson P."/>
            <person name="Chisholm S.W."/>
        </authorList>
    </citation>
    <scope>NUCLEOTIDE SEQUENCE [LARGE SCALE GENOMIC DNA]</scope>
    <source>
        <strain>MIT 9211</strain>
    </source>
</reference>
<comment type="function">
    <text evidence="1">Catalyzes the ATP-dependent amination of UTP to CTP with either L-glutamine or ammonia as the source of nitrogen. Regulates intracellular CTP levels through interactions with the four ribonucleotide triphosphates.</text>
</comment>
<comment type="catalytic activity">
    <reaction evidence="1">
        <text>UTP + L-glutamine + ATP + H2O = CTP + L-glutamate + ADP + phosphate + 2 H(+)</text>
        <dbReference type="Rhea" id="RHEA:26426"/>
        <dbReference type="ChEBI" id="CHEBI:15377"/>
        <dbReference type="ChEBI" id="CHEBI:15378"/>
        <dbReference type="ChEBI" id="CHEBI:29985"/>
        <dbReference type="ChEBI" id="CHEBI:30616"/>
        <dbReference type="ChEBI" id="CHEBI:37563"/>
        <dbReference type="ChEBI" id="CHEBI:43474"/>
        <dbReference type="ChEBI" id="CHEBI:46398"/>
        <dbReference type="ChEBI" id="CHEBI:58359"/>
        <dbReference type="ChEBI" id="CHEBI:456216"/>
        <dbReference type="EC" id="6.3.4.2"/>
    </reaction>
</comment>
<comment type="catalytic activity">
    <reaction evidence="1">
        <text>L-glutamine + H2O = L-glutamate + NH4(+)</text>
        <dbReference type="Rhea" id="RHEA:15889"/>
        <dbReference type="ChEBI" id="CHEBI:15377"/>
        <dbReference type="ChEBI" id="CHEBI:28938"/>
        <dbReference type="ChEBI" id="CHEBI:29985"/>
        <dbReference type="ChEBI" id="CHEBI:58359"/>
    </reaction>
</comment>
<comment type="catalytic activity">
    <reaction evidence="1">
        <text>UTP + NH4(+) + ATP = CTP + ADP + phosphate + 2 H(+)</text>
        <dbReference type="Rhea" id="RHEA:16597"/>
        <dbReference type="ChEBI" id="CHEBI:15378"/>
        <dbReference type="ChEBI" id="CHEBI:28938"/>
        <dbReference type="ChEBI" id="CHEBI:30616"/>
        <dbReference type="ChEBI" id="CHEBI:37563"/>
        <dbReference type="ChEBI" id="CHEBI:43474"/>
        <dbReference type="ChEBI" id="CHEBI:46398"/>
        <dbReference type="ChEBI" id="CHEBI:456216"/>
    </reaction>
</comment>
<comment type="activity regulation">
    <text evidence="1">Allosterically activated by GTP, when glutamine is the substrate; GTP has no effect on the reaction when ammonia is the substrate. The allosteric effector GTP functions by stabilizing the protein conformation that binds the tetrahedral intermediate(s) formed during glutamine hydrolysis. Inhibited by the product CTP, via allosteric rather than competitive inhibition.</text>
</comment>
<comment type="pathway">
    <text evidence="1">Pyrimidine metabolism; CTP biosynthesis via de novo pathway; CTP from UDP: step 2/2.</text>
</comment>
<comment type="subunit">
    <text evidence="1">Homotetramer.</text>
</comment>
<comment type="miscellaneous">
    <text evidence="1">CTPSs have evolved a hybrid strategy for distinguishing between UTP and CTP. The overlapping regions of the product feedback inhibitory and substrate sites recognize a common feature in both compounds, the triphosphate moiety. To differentiate isosteric substrate and product pyrimidine rings, an additional pocket far from the expected kinase/ligase catalytic site, specifically recognizes the cytosine and ribose portions of the product inhibitor.</text>
</comment>
<comment type="similarity">
    <text evidence="1">Belongs to the CTP synthase family.</text>
</comment>
<dbReference type="EC" id="6.3.4.2" evidence="1"/>
<dbReference type="EMBL" id="CP000878">
    <property type="protein sequence ID" value="ABX09752.1"/>
    <property type="molecule type" value="Genomic_DNA"/>
</dbReference>
<dbReference type="RefSeq" id="WP_012196372.1">
    <property type="nucleotide sequence ID" value="NC_009976.1"/>
</dbReference>
<dbReference type="SMR" id="A9BDD9"/>
<dbReference type="STRING" id="93059.P9211_18211"/>
<dbReference type="KEGG" id="pmj:P9211_18211"/>
<dbReference type="eggNOG" id="COG0504">
    <property type="taxonomic scope" value="Bacteria"/>
</dbReference>
<dbReference type="HOGENOM" id="CLU_011675_5_0_3"/>
<dbReference type="OrthoDB" id="9801107at2"/>
<dbReference type="UniPathway" id="UPA00159">
    <property type="reaction ID" value="UER00277"/>
</dbReference>
<dbReference type="Proteomes" id="UP000000788">
    <property type="component" value="Chromosome"/>
</dbReference>
<dbReference type="GO" id="GO:0005829">
    <property type="term" value="C:cytosol"/>
    <property type="evidence" value="ECO:0007669"/>
    <property type="project" value="TreeGrafter"/>
</dbReference>
<dbReference type="GO" id="GO:0005524">
    <property type="term" value="F:ATP binding"/>
    <property type="evidence" value="ECO:0007669"/>
    <property type="project" value="UniProtKB-KW"/>
</dbReference>
<dbReference type="GO" id="GO:0003883">
    <property type="term" value="F:CTP synthase activity"/>
    <property type="evidence" value="ECO:0007669"/>
    <property type="project" value="UniProtKB-UniRule"/>
</dbReference>
<dbReference type="GO" id="GO:0004359">
    <property type="term" value="F:glutaminase activity"/>
    <property type="evidence" value="ECO:0007669"/>
    <property type="project" value="RHEA"/>
</dbReference>
<dbReference type="GO" id="GO:0042802">
    <property type="term" value="F:identical protein binding"/>
    <property type="evidence" value="ECO:0007669"/>
    <property type="project" value="TreeGrafter"/>
</dbReference>
<dbReference type="GO" id="GO:0046872">
    <property type="term" value="F:metal ion binding"/>
    <property type="evidence" value="ECO:0007669"/>
    <property type="project" value="UniProtKB-KW"/>
</dbReference>
<dbReference type="GO" id="GO:0044210">
    <property type="term" value="P:'de novo' CTP biosynthetic process"/>
    <property type="evidence" value="ECO:0007669"/>
    <property type="project" value="UniProtKB-UniRule"/>
</dbReference>
<dbReference type="GO" id="GO:0019856">
    <property type="term" value="P:pyrimidine nucleobase biosynthetic process"/>
    <property type="evidence" value="ECO:0007669"/>
    <property type="project" value="TreeGrafter"/>
</dbReference>
<dbReference type="CDD" id="cd03113">
    <property type="entry name" value="CTPS_N"/>
    <property type="match status" value="1"/>
</dbReference>
<dbReference type="CDD" id="cd01746">
    <property type="entry name" value="GATase1_CTP_Synthase"/>
    <property type="match status" value="1"/>
</dbReference>
<dbReference type="FunFam" id="3.40.50.300:FF:000009">
    <property type="entry name" value="CTP synthase"/>
    <property type="match status" value="1"/>
</dbReference>
<dbReference type="FunFam" id="3.40.50.880:FF:000002">
    <property type="entry name" value="CTP synthase"/>
    <property type="match status" value="1"/>
</dbReference>
<dbReference type="Gene3D" id="3.40.50.880">
    <property type="match status" value="1"/>
</dbReference>
<dbReference type="Gene3D" id="3.40.50.300">
    <property type="entry name" value="P-loop containing nucleotide triphosphate hydrolases"/>
    <property type="match status" value="1"/>
</dbReference>
<dbReference type="HAMAP" id="MF_01227">
    <property type="entry name" value="PyrG"/>
    <property type="match status" value="1"/>
</dbReference>
<dbReference type="InterPro" id="IPR029062">
    <property type="entry name" value="Class_I_gatase-like"/>
</dbReference>
<dbReference type="InterPro" id="IPR004468">
    <property type="entry name" value="CTP_synthase"/>
</dbReference>
<dbReference type="InterPro" id="IPR017456">
    <property type="entry name" value="CTP_synthase_N"/>
</dbReference>
<dbReference type="InterPro" id="IPR017926">
    <property type="entry name" value="GATASE"/>
</dbReference>
<dbReference type="InterPro" id="IPR033828">
    <property type="entry name" value="GATase1_CTP_Synthase"/>
</dbReference>
<dbReference type="InterPro" id="IPR027417">
    <property type="entry name" value="P-loop_NTPase"/>
</dbReference>
<dbReference type="NCBIfam" id="NF003792">
    <property type="entry name" value="PRK05380.1"/>
    <property type="match status" value="1"/>
</dbReference>
<dbReference type="NCBIfam" id="TIGR00337">
    <property type="entry name" value="PyrG"/>
    <property type="match status" value="1"/>
</dbReference>
<dbReference type="PANTHER" id="PTHR11550">
    <property type="entry name" value="CTP SYNTHASE"/>
    <property type="match status" value="1"/>
</dbReference>
<dbReference type="PANTHER" id="PTHR11550:SF0">
    <property type="entry name" value="CTP SYNTHASE-RELATED"/>
    <property type="match status" value="1"/>
</dbReference>
<dbReference type="Pfam" id="PF06418">
    <property type="entry name" value="CTP_synth_N"/>
    <property type="match status" value="1"/>
</dbReference>
<dbReference type="Pfam" id="PF00117">
    <property type="entry name" value="GATase"/>
    <property type="match status" value="1"/>
</dbReference>
<dbReference type="SUPFAM" id="SSF52317">
    <property type="entry name" value="Class I glutamine amidotransferase-like"/>
    <property type="match status" value="1"/>
</dbReference>
<dbReference type="SUPFAM" id="SSF52540">
    <property type="entry name" value="P-loop containing nucleoside triphosphate hydrolases"/>
    <property type="match status" value="1"/>
</dbReference>
<dbReference type="PROSITE" id="PS51273">
    <property type="entry name" value="GATASE_TYPE_1"/>
    <property type="match status" value="1"/>
</dbReference>
<protein>
    <recommendedName>
        <fullName evidence="1">CTP synthase</fullName>
        <ecNumber evidence="1">6.3.4.2</ecNumber>
    </recommendedName>
    <alternativeName>
        <fullName evidence="1">Cytidine 5'-triphosphate synthase</fullName>
    </alternativeName>
    <alternativeName>
        <fullName evidence="1">Cytidine triphosphate synthetase</fullName>
        <shortName evidence="1">CTP synthetase</shortName>
        <shortName evidence="1">CTPS</shortName>
    </alternativeName>
    <alternativeName>
        <fullName evidence="1">UTP--ammonia ligase</fullName>
    </alternativeName>
</protein>
<evidence type="ECO:0000255" key="1">
    <source>
        <dbReference type="HAMAP-Rule" id="MF_01227"/>
    </source>
</evidence>
<evidence type="ECO:0000256" key="2">
    <source>
        <dbReference type="SAM" id="MobiDB-lite"/>
    </source>
</evidence>
<sequence>MPKFVFVTGGVVSSIGKGIVAASLGRLLKSRGYNVSILKLDPYLNVDPGTMSPFQHGEVFVTEDGAETDLDLGHYERFTDTALSRLNSVTTGSIYQSVINKERRGDYDGGTVQVIPHITQEIRERIHRVGANSNADVVITEIGGTVGDIESLPFLEAIREFKGDVGKKDIAYIHVTLLPFIGTSGELKTKPTQHSVKELRSIGIQPDLLICRSDRPINDNLKNKISGFCGVNNEAVIPALDADSIYSVPLALKAEGLCKEVLEFLDLTDHECNLEKWQELVHKLRNPGPSVKVAVVGKYVQLNDAYLSVVEALRHACIENDASLDLHWICAEKIEEEGSNDLLTGMDAIVVPGGFGSRGVDGKIAAIQWAREQRVPFLGLCLGMQCAVIEWARNLAGLKEATSFELDQSTPHPVIHLLPEQQDVVDLGGTMRLGVYPCRLQAETMGQKLYGEQVVYERHRHRYEFNNAYRNLFIESGYTISGTSPDGRLVELIELKGHPFFTACQYHPEFLSRPGKPHPLFKGLIAAAQSRLPRSPQEALKQTQINSPNQSKNNP</sequence>
<organism>
    <name type="scientific">Prochlorococcus marinus (strain MIT 9211)</name>
    <dbReference type="NCBI Taxonomy" id="93059"/>
    <lineage>
        <taxon>Bacteria</taxon>
        <taxon>Bacillati</taxon>
        <taxon>Cyanobacteriota</taxon>
        <taxon>Cyanophyceae</taxon>
        <taxon>Synechococcales</taxon>
        <taxon>Prochlorococcaceae</taxon>
        <taxon>Prochlorococcus</taxon>
    </lineage>
</organism>
<gene>
    <name evidence="1" type="primary">pyrG</name>
    <name type="ordered locus">P9211_18211</name>
</gene>
<proteinExistence type="inferred from homology"/>
<keyword id="KW-0067">ATP-binding</keyword>
<keyword id="KW-0315">Glutamine amidotransferase</keyword>
<keyword id="KW-0436">Ligase</keyword>
<keyword id="KW-0460">Magnesium</keyword>
<keyword id="KW-0479">Metal-binding</keyword>
<keyword id="KW-0547">Nucleotide-binding</keyword>
<keyword id="KW-0665">Pyrimidine biosynthesis</keyword>
<keyword id="KW-1185">Reference proteome</keyword>
<name>PYRG_PROM4</name>
<accession>A9BDD9</accession>
<feature type="chain" id="PRO_1000139525" description="CTP synthase">
    <location>
        <begin position="1"/>
        <end position="555"/>
    </location>
</feature>
<feature type="domain" description="Glutamine amidotransferase type-1" evidence="1">
    <location>
        <begin position="292"/>
        <end position="534"/>
    </location>
</feature>
<feature type="region of interest" description="Amidoligase domain" evidence="1">
    <location>
        <begin position="1"/>
        <end position="267"/>
    </location>
</feature>
<feature type="region of interest" description="Disordered" evidence="2">
    <location>
        <begin position="532"/>
        <end position="555"/>
    </location>
</feature>
<feature type="compositionally biased region" description="Polar residues" evidence="2">
    <location>
        <begin position="540"/>
        <end position="555"/>
    </location>
</feature>
<feature type="active site" description="Nucleophile; for glutamine hydrolysis" evidence="1">
    <location>
        <position position="381"/>
    </location>
</feature>
<feature type="active site" evidence="1">
    <location>
        <position position="507"/>
    </location>
</feature>
<feature type="active site" evidence="1">
    <location>
        <position position="509"/>
    </location>
</feature>
<feature type="binding site" evidence="1">
    <location>
        <position position="13"/>
    </location>
    <ligand>
        <name>CTP</name>
        <dbReference type="ChEBI" id="CHEBI:37563"/>
        <note>allosteric inhibitor</note>
    </ligand>
</feature>
<feature type="binding site" evidence="1">
    <location>
        <position position="13"/>
    </location>
    <ligand>
        <name>UTP</name>
        <dbReference type="ChEBI" id="CHEBI:46398"/>
    </ligand>
</feature>
<feature type="binding site" evidence="1">
    <location>
        <begin position="14"/>
        <end position="19"/>
    </location>
    <ligand>
        <name>ATP</name>
        <dbReference type="ChEBI" id="CHEBI:30616"/>
    </ligand>
</feature>
<feature type="binding site" evidence="1">
    <location>
        <position position="71"/>
    </location>
    <ligand>
        <name>ATP</name>
        <dbReference type="ChEBI" id="CHEBI:30616"/>
    </ligand>
</feature>
<feature type="binding site" evidence="1">
    <location>
        <position position="71"/>
    </location>
    <ligand>
        <name>Mg(2+)</name>
        <dbReference type="ChEBI" id="CHEBI:18420"/>
    </ligand>
</feature>
<feature type="binding site" evidence="1">
    <location>
        <position position="141"/>
    </location>
    <ligand>
        <name>Mg(2+)</name>
        <dbReference type="ChEBI" id="CHEBI:18420"/>
    </ligand>
</feature>
<feature type="binding site" evidence="1">
    <location>
        <begin position="148"/>
        <end position="150"/>
    </location>
    <ligand>
        <name>CTP</name>
        <dbReference type="ChEBI" id="CHEBI:37563"/>
        <note>allosteric inhibitor</note>
    </ligand>
</feature>
<feature type="binding site" evidence="1">
    <location>
        <begin position="188"/>
        <end position="193"/>
    </location>
    <ligand>
        <name>CTP</name>
        <dbReference type="ChEBI" id="CHEBI:37563"/>
        <note>allosteric inhibitor</note>
    </ligand>
</feature>
<feature type="binding site" evidence="1">
    <location>
        <begin position="188"/>
        <end position="193"/>
    </location>
    <ligand>
        <name>UTP</name>
        <dbReference type="ChEBI" id="CHEBI:46398"/>
    </ligand>
</feature>
<feature type="binding site" evidence="1">
    <location>
        <position position="224"/>
    </location>
    <ligand>
        <name>CTP</name>
        <dbReference type="ChEBI" id="CHEBI:37563"/>
        <note>allosteric inhibitor</note>
    </ligand>
</feature>
<feature type="binding site" evidence="1">
    <location>
        <position position="224"/>
    </location>
    <ligand>
        <name>UTP</name>
        <dbReference type="ChEBI" id="CHEBI:46398"/>
    </ligand>
</feature>
<feature type="binding site" evidence="1">
    <location>
        <position position="354"/>
    </location>
    <ligand>
        <name>L-glutamine</name>
        <dbReference type="ChEBI" id="CHEBI:58359"/>
    </ligand>
</feature>
<feature type="binding site" evidence="1">
    <location>
        <begin position="382"/>
        <end position="385"/>
    </location>
    <ligand>
        <name>L-glutamine</name>
        <dbReference type="ChEBI" id="CHEBI:58359"/>
    </ligand>
</feature>
<feature type="binding site" evidence="1">
    <location>
        <position position="405"/>
    </location>
    <ligand>
        <name>L-glutamine</name>
        <dbReference type="ChEBI" id="CHEBI:58359"/>
    </ligand>
</feature>
<feature type="binding site" evidence="1">
    <location>
        <position position="462"/>
    </location>
    <ligand>
        <name>L-glutamine</name>
        <dbReference type="ChEBI" id="CHEBI:58359"/>
    </ligand>
</feature>